<organism>
    <name type="scientific">Methanosarcina mazei (strain ATCC BAA-159 / DSM 3647 / Goe1 / Go1 / JCM 11833 / OCM 88)</name>
    <name type="common">Methanosarcina frisia</name>
    <dbReference type="NCBI Taxonomy" id="192952"/>
    <lineage>
        <taxon>Archaea</taxon>
        <taxon>Methanobacteriati</taxon>
        <taxon>Methanobacteriota</taxon>
        <taxon>Stenosarchaea group</taxon>
        <taxon>Methanomicrobia</taxon>
        <taxon>Methanosarcinales</taxon>
        <taxon>Methanosarcinaceae</taxon>
        <taxon>Methanosarcina</taxon>
    </lineage>
</organism>
<keyword id="KW-0067">ATP-binding</keyword>
<keyword id="KW-0963">Cytoplasm</keyword>
<keyword id="KW-0418">Kinase</keyword>
<keyword id="KW-0460">Magnesium</keyword>
<keyword id="KW-0479">Metal-binding</keyword>
<keyword id="KW-0547">Nucleotide-binding</keyword>
<keyword id="KW-0808">Transferase</keyword>
<feature type="chain" id="PRO_0000408035" description="Acetate kinase">
    <location>
        <begin position="1"/>
        <end position="408"/>
    </location>
</feature>
<feature type="active site" description="Proton donor/acceptor" evidence="1">
    <location>
        <position position="148"/>
    </location>
</feature>
<feature type="binding site" evidence="1">
    <location>
        <position position="7"/>
    </location>
    <ligand>
        <name>Mg(2+)</name>
        <dbReference type="ChEBI" id="CHEBI:18420"/>
    </ligand>
</feature>
<feature type="binding site" evidence="1">
    <location>
        <position position="14"/>
    </location>
    <ligand>
        <name>ATP</name>
        <dbReference type="ChEBI" id="CHEBI:30616"/>
    </ligand>
</feature>
<feature type="binding site" evidence="1">
    <location>
        <position position="91"/>
    </location>
    <ligand>
        <name>substrate</name>
    </ligand>
</feature>
<feature type="binding site" evidence="1">
    <location>
        <begin position="208"/>
        <end position="212"/>
    </location>
    <ligand>
        <name>ATP</name>
        <dbReference type="ChEBI" id="CHEBI:30616"/>
    </ligand>
</feature>
<feature type="binding site" evidence="1">
    <location>
        <begin position="283"/>
        <end position="285"/>
    </location>
    <ligand>
        <name>ATP</name>
        <dbReference type="ChEBI" id="CHEBI:30616"/>
    </ligand>
</feature>
<feature type="binding site" evidence="1">
    <location>
        <begin position="331"/>
        <end position="335"/>
    </location>
    <ligand>
        <name>ATP</name>
        <dbReference type="ChEBI" id="CHEBI:30616"/>
    </ligand>
</feature>
<feature type="binding site" evidence="1">
    <location>
        <position position="384"/>
    </location>
    <ligand>
        <name>Mg(2+)</name>
        <dbReference type="ChEBI" id="CHEBI:18420"/>
    </ligand>
</feature>
<feature type="site" description="Transition state stabilizer" evidence="1">
    <location>
        <position position="180"/>
    </location>
</feature>
<feature type="site" description="Transition state stabilizer" evidence="1">
    <location>
        <position position="241"/>
    </location>
</feature>
<reference key="1">
    <citation type="journal article" date="2002" name="J. Mol. Microbiol. Biotechnol.">
        <title>The genome of Methanosarcina mazei: evidence for lateral gene transfer between Bacteria and Archaea.</title>
        <authorList>
            <person name="Deppenmeier U."/>
            <person name="Johann A."/>
            <person name="Hartsch T."/>
            <person name="Merkl R."/>
            <person name="Schmitz R.A."/>
            <person name="Martinez-Arias R."/>
            <person name="Henne A."/>
            <person name="Wiezer A."/>
            <person name="Baeumer S."/>
            <person name="Jacobi C."/>
            <person name="Brueggemann H."/>
            <person name="Lienard T."/>
            <person name="Christmann A."/>
            <person name="Boemecke M."/>
            <person name="Steckel S."/>
            <person name="Bhattacharyya A."/>
            <person name="Lykidis A."/>
            <person name="Overbeek R."/>
            <person name="Klenk H.-P."/>
            <person name="Gunsalus R.P."/>
            <person name="Fritz H.-J."/>
            <person name="Gottschalk G."/>
        </authorList>
    </citation>
    <scope>NUCLEOTIDE SEQUENCE [LARGE SCALE GENOMIC DNA]</scope>
    <source>
        <strain>ATCC BAA-159 / DSM 3647 / Goe1 / Go1 / JCM 11833 / OCM 88</strain>
    </source>
</reference>
<dbReference type="EC" id="2.7.2.1" evidence="1"/>
<dbReference type="EMBL" id="AE008384">
    <property type="protein sequence ID" value="AAM30191.1"/>
    <property type="status" value="ALT_INIT"/>
    <property type="molecule type" value="Genomic_DNA"/>
</dbReference>
<dbReference type="RefSeq" id="WP_015411143.1">
    <property type="nucleotide sequence ID" value="NC_003901.1"/>
</dbReference>
<dbReference type="SMR" id="P0CW05"/>
<dbReference type="KEGG" id="mma:MM_0495"/>
<dbReference type="PATRIC" id="fig|192952.21.peg.591"/>
<dbReference type="eggNOG" id="arCOG05260">
    <property type="taxonomic scope" value="Archaea"/>
</dbReference>
<dbReference type="HOGENOM" id="CLU_020352_0_1_2"/>
<dbReference type="BRENDA" id="2.7.2.1">
    <property type="organism ID" value="3270"/>
</dbReference>
<dbReference type="UniPathway" id="UPA00340">
    <property type="reaction ID" value="UER00458"/>
</dbReference>
<dbReference type="Proteomes" id="UP000000595">
    <property type="component" value="Chromosome"/>
</dbReference>
<dbReference type="GO" id="GO:0005737">
    <property type="term" value="C:cytoplasm"/>
    <property type="evidence" value="ECO:0007669"/>
    <property type="project" value="UniProtKB-SubCell"/>
</dbReference>
<dbReference type="GO" id="GO:0008776">
    <property type="term" value="F:acetate kinase activity"/>
    <property type="evidence" value="ECO:0007669"/>
    <property type="project" value="UniProtKB-UniRule"/>
</dbReference>
<dbReference type="GO" id="GO:0005524">
    <property type="term" value="F:ATP binding"/>
    <property type="evidence" value="ECO:0007669"/>
    <property type="project" value="UniProtKB-KW"/>
</dbReference>
<dbReference type="GO" id="GO:0000287">
    <property type="term" value="F:magnesium ion binding"/>
    <property type="evidence" value="ECO:0007669"/>
    <property type="project" value="UniProtKB-UniRule"/>
</dbReference>
<dbReference type="GO" id="GO:0006083">
    <property type="term" value="P:acetate metabolic process"/>
    <property type="evidence" value="ECO:0007669"/>
    <property type="project" value="TreeGrafter"/>
</dbReference>
<dbReference type="GO" id="GO:0006085">
    <property type="term" value="P:acetyl-CoA biosynthetic process"/>
    <property type="evidence" value="ECO:0007669"/>
    <property type="project" value="UniProtKB-UniRule"/>
</dbReference>
<dbReference type="CDD" id="cd24010">
    <property type="entry name" value="ASKHA_NBD_AcK_PK"/>
    <property type="match status" value="1"/>
</dbReference>
<dbReference type="Gene3D" id="3.30.420.40">
    <property type="match status" value="2"/>
</dbReference>
<dbReference type="HAMAP" id="MF_00020">
    <property type="entry name" value="Acetate_kinase"/>
    <property type="match status" value="1"/>
</dbReference>
<dbReference type="InterPro" id="IPR004372">
    <property type="entry name" value="Ac/propionate_kinase"/>
</dbReference>
<dbReference type="InterPro" id="IPR000890">
    <property type="entry name" value="Aliphatic_acid_kin_short-chain"/>
</dbReference>
<dbReference type="InterPro" id="IPR023865">
    <property type="entry name" value="Aliphatic_acid_kinase_CS"/>
</dbReference>
<dbReference type="InterPro" id="IPR043129">
    <property type="entry name" value="ATPase_NBD"/>
</dbReference>
<dbReference type="NCBIfam" id="TIGR00016">
    <property type="entry name" value="ackA"/>
    <property type="match status" value="1"/>
</dbReference>
<dbReference type="PANTHER" id="PTHR21060">
    <property type="entry name" value="ACETATE KINASE"/>
    <property type="match status" value="1"/>
</dbReference>
<dbReference type="PANTHER" id="PTHR21060:SF15">
    <property type="entry name" value="ACETATE KINASE-RELATED"/>
    <property type="match status" value="1"/>
</dbReference>
<dbReference type="Pfam" id="PF00871">
    <property type="entry name" value="Acetate_kinase"/>
    <property type="match status" value="1"/>
</dbReference>
<dbReference type="PIRSF" id="PIRSF000722">
    <property type="entry name" value="Acetate_prop_kin"/>
    <property type="match status" value="1"/>
</dbReference>
<dbReference type="PRINTS" id="PR00471">
    <property type="entry name" value="ACETATEKNASE"/>
</dbReference>
<dbReference type="SUPFAM" id="SSF53067">
    <property type="entry name" value="Actin-like ATPase domain"/>
    <property type="match status" value="2"/>
</dbReference>
<dbReference type="PROSITE" id="PS01075">
    <property type="entry name" value="ACETATE_KINASE_1"/>
    <property type="match status" value="1"/>
</dbReference>
<dbReference type="PROSITE" id="PS01076">
    <property type="entry name" value="ACETATE_KINASE_2"/>
    <property type="match status" value="1"/>
</dbReference>
<accession>P0CW05</accession>
<accession>Q8PZJ7</accession>
<accession>Q8X269</accession>
<proteinExistence type="inferred from homology"/>
<sequence>MKVLVINAGSSSLKYQLIDMTNESALAIGLCERIGIDNSIITQKRFDGKKLEKQTDLPNHKIALEEVVKALTDSEFGVIKSMDEINAVGHRVVHGGEKFNSSALINEGVEQAIKDCFELAPLHNPPNMMGISSCQEIMPGVPMVAVFDTAFHHTIPPYAYMYALPYELYEKYGIRKYGFHGTSHFYVAKRAAAMLGKPEQDVKVITCHLGNGSSITAVKGGKSIETTMGFTPLEGVAMGTRCGSIDPAVVPFIMEKEGLSTREIDTLMNKKSGVLGVSSLSNDFRDLDEAASKGNQKAELALEIFAYKIKKVIGEYIAVLNGVDAIVFTAGIGENSASIRKRILADLDGIGIKIDEEKNKIRGQEIDISTPDATVRVLVIPTNEELTIARDTKEICETEVKLRSSVPI</sequence>
<name>ACKA_METMA</name>
<gene>
    <name evidence="1" type="primary">ackA</name>
    <name type="synonym">ack</name>
    <name type="ordered locus">MM_0495</name>
</gene>
<evidence type="ECO:0000255" key="1">
    <source>
        <dbReference type="HAMAP-Rule" id="MF_00020"/>
    </source>
</evidence>
<evidence type="ECO:0000305" key="2"/>
<comment type="function">
    <text evidence="1">Catalyzes the formation of acetyl phosphate from acetate and ATP. Can also catalyze the reverse reaction.</text>
</comment>
<comment type="catalytic activity">
    <reaction evidence="1">
        <text>acetate + ATP = acetyl phosphate + ADP</text>
        <dbReference type="Rhea" id="RHEA:11352"/>
        <dbReference type="ChEBI" id="CHEBI:22191"/>
        <dbReference type="ChEBI" id="CHEBI:30089"/>
        <dbReference type="ChEBI" id="CHEBI:30616"/>
        <dbReference type="ChEBI" id="CHEBI:456216"/>
        <dbReference type="EC" id="2.7.2.1"/>
    </reaction>
</comment>
<comment type="cofactor">
    <cofactor evidence="1">
        <name>Mg(2+)</name>
        <dbReference type="ChEBI" id="CHEBI:18420"/>
    </cofactor>
    <cofactor evidence="1">
        <name>Mn(2+)</name>
        <dbReference type="ChEBI" id="CHEBI:29035"/>
    </cofactor>
    <text evidence="1">Mg(2+). Can also accept Mn(2+).</text>
</comment>
<comment type="pathway">
    <text evidence="1">Metabolic intermediate biosynthesis; acetyl-CoA biosynthesis; acetyl-CoA from acetate: step 1/2.</text>
</comment>
<comment type="subunit">
    <text evidence="1">Homodimer.</text>
</comment>
<comment type="subcellular location">
    <subcellularLocation>
        <location evidence="1">Cytoplasm</location>
    </subcellularLocation>
</comment>
<comment type="similarity">
    <text evidence="1">Belongs to the acetokinase family.</text>
</comment>
<comment type="sequence caution" evidence="2">
    <conflict type="erroneous initiation">
        <sequence resource="EMBL-CDS" id="AAM30191"/>
    </conflict>
    <text>Extended N-terminus.</text>
</comment>
<protein>
    <recommendedName>
        <fullName evidence="1">Acetate kinase</fullName>
        <ecNumber evidence="1">2.7.2.1</ecNumber>
    </recommendedName>
    <alternativeName>
        <fullName evidence="1">Acetokinase</fullName>
    </alternativeName>
</protein>